<evidence type="ECO:0000250" key="1"/>
<evidence type="ECO:0000250" key="2">
    <source>
        <dbReference type="UniProtKB" id="P02668"/>
    </source>
</evidence>
<evidence type="ECO:0000250" key="3">
    <source>
        <dbReference type="UniProtKB" id="P02670"/>
    </source>
</evidence>
<evidence type="ECO:0000256" key="4">
    <source>
        <dbReference type="SAM" id="MobiDB-lite"/>
    </source>
</evidence>
<evidence type="ECO:0000305" key="5"/>
<protein>
    <recommendedName>
        <fullName>Kappa-casein</fullName>
    </recommendedName>
</protein>
<accession>P50423</accession>
<reference key="1">
    <citation type="journal article" date="1995" name="J. Mol. Evol.">
        <title>Molecular phylogeny based on the kappa-casein and cytochrome b sequences in the mammalian suborder ruminantia.</title>
        <authorList>
            <person name="Chikuni K."/>
            <person name="Mori Y."/>
            <person name="Tabata T."/>
            <person name="Saito M."/>
            <person name="Monma M."/>
            <person name="Kosugiyama M."/>
        </authorList>
    </citation>
    <scope>NUCLEOTIDE SEQUENCE [GENOMIC DNA]</scope>
</reference>
<reference key="2">
    <citation type="journal article" date="1996" name="Mol. Phylogenet. Evol.">
        <title>K-casein gene phylogeny of higher ruminants (Pecora, Artiodactyla).</title>
        <authorList>
            <person name="Cronin M.A."/>
            <person name="Stuart R."/>
            <person name="Pierson B.J."/>
            <person name="Patton J.C."/>
        </authorList>
    </citation>
    <scope>NUCLEOTIDE SEQUENCE [GENOMIC DNA] OF 69-192</scope>
</reference>
<dbReference type="EMBL" id="D32185">
    <property type="protein sequence ID" value="BAA06886.1"/>
    <property type="molecule type" value="Genomic_DNA"/>
</dbReference>
<dbReference type="EMBL" id="U37512">
    <property type="protein sequence ID" value="AAC48658.1"/>
    <property type="molecule type" value="Genomic_DNA"/>
</dbReference>
<dbReference type="GlyCosmos" id="P50423">
    <property type="glycosylation" value="7 sites, No reported glycans"/>
</dbReference>
<dbReference type="GO" id="GO:0005615">
    <property type="term" value="C:extracellular space"/>
    <property type="evidence" value="ECO:0007669"/>
    <property type="project" value="TreeGrafter"/>
</dbReference>
<dbReference type="GO" id="GO:0007595">
    <property type="term" value="P:lactation"/>
    <property type="evidence" value="ECO:0007669"/>
    <property type="project" value="TreeGrafter"/>
</dbReference>
<dbReference type="GO" id="GO:0050821">
    <property type="term" value="P:protein stabilization"/>
    <property type="evidence" value="ECO:0007669"/>
    <property type="project" value="TreeGrafter"/>
</dbReference>
<dbReference type="InterPro" id="IPR000117">
    <property type="entry name" value="Casein_kappa"/>
</dbReference>
<dbReference type="PANTHER" id="PTHR11470">
    <property type="entry name" value="KAPPA CASEIN"/>
    <property type="match status" value="1"/>
</dbReference>
<dbReference type="PANTHER" id="PTHR11470:SF2">
    <property type="entry name" value="KAPPA-CASEIN"/>
    <property type="match status" value="1"/>
</dbReference>
<dbReference type="Pfam" id="PF00997">
    <property type="entry name" value="Casein_kappa"/>
    <property type="match status" value="1"/>
</dbReference>
<dbReference type="PIRSF" id="PIRSF002374">
    <property type="entry name" value="Casein_kappa"/>
    <property type="match status" value="1"/>
</dbReference>
<keyword id="KW-0325">Glycoprotein</keyword>
<keyword id="KW-0494">Milk protein</keyword>
<keyword id="KW-0597">Phosphoprotein</keyword>
<keyword id="KW-0964">Secreted</keyword>
<keyword id="KW-0732">Signal</keyword>
<proteinExistence type="evidence at transcript level"/>
<organism>
    <name type="scientific">Oreamnos americanus</name>
    <name type="common">Mountain goat</name>
    <name type="synonym">Rupicapra americana</name>
    <dbReference type="NCBI Taxonomy" id="34873"/>
    <lineage>
        <taxon>Eukaryota</taxon>
        <taxon>Metazoa</taxon>
        <taxon>Chordata</taxon>
        <taxon>Craniata</taxon>
        <taxon>Vertebrata</taxon>
        <taxon>Euteleostomi</taxon>
        <taxon>Mammalia</taxon>
        <taxon>Eutheria</taxon>
        <taxon>Laurasiatheria</taxon>
        <taxon>Artiodactyla</taxon>
        <taxon>Ruminantia</taxon>
        <taxon>Pecora</taxon>
        <taxon>Bovidae</taxon>
        <taxon>Caprinae</taxon>
        <taxon>Oreamnos</taxon>
    </lineage>
</organism>
<gene>
    <name type="primary">CSN3</name>
    <name type="synonym">CSN10</name>
    <name type="synonym">CSNK</name>
</gene>
<feature type="signal peptide" evidence="1">
    <location>
        <begin position="1"/>
        <end position="21"/>
    </location>
</feature>
<feature type="chain" id="PRO_0000004501" description="Kappa-casein">
    <location>
        <begin position="22"/>
        <end position="192"/>
    </location>
</feature>
<feature type="region of interest" description="Disordered" evidence="4">
    <location>
        <begin position="168"/>
        <end position="192"/>
    </location>
</feature>
<feature type="site" description="Cleavage; by chymosin/rennin" evidence="1">
    <location>
        <begin position="126"/>
        <end position="127"/>
    </location>
</feature>
<feature type="modified residue" description="Phosphoserine" evidence="2">
    <location>
        <position position="148"/>
    </location>
</feature>
<feature type="modified residue" description="Phosphoserine; alternate" evidence="2">
    <location>
        <position position="172"/>
    </location>
</feature>
<feature type="modified residue" description="Phosphoserine" evidence="3">
    <location>
        <position position="189"/>
    </location>
</feature>
<feature type="glycosylation site" description="O-linked (GalNAc...) threonine" evidence="2">
    <location>
        <position position="142"/>
    </location>
</feature>
<feature type="glycosylation site" description="O-linked (GalNAc...) threonine" evidence="2">
    <location>
        <position position="152"/>
    </location>
</feature>
<feature type="glycosylation site" description="O-linked (GalNAc...) serine" evidence="2">
    <location>
        <position position="155"/>
    </location>
</feature>
<feature type="glycosylation site" description="O-linked (GalNAc...) threonine" evidence="2">
    <location>
        <position position="159"/>
    </location>
</feature>
<feature type="glycosylation site" description="O-linked (GalNAc...) threonine" evidence="2">
    <location>
        <position position="165"/>
    </location>
</feature>
<feature type="glycosylation site" description="O-linked (GalNAc...) serine; alternate" evidence="2">
    <location>
        <position position="172"/>
    </location>
</feature>
<feature type="glycosylation site" description="O-linked (GalNAc...) threonine" evidence="2">
    <location>
        <position position="188"/>
    </location>
</feature>
<sequence length="192" mass="21525">MMKSFFLVVTILALTLPFLGAQEQNQEQPICCEKDERFFDDKIAKYIPIQYVLSRYPSYGLNYYQQRPVALINNQFLPYPYYAKPVAVRSPAQILQWQVLPNTAPAKSCQDQPTTMARHPHPHLSFMAIPPKKDQDKTEIPTINTIASAEPTVHSTPTTEAIVNTVDNPEASSESIVSAPETNTAQVTSTEV</sequence>
<comment type="function">
    <text>Kappa-casein stabilizes micelle formation, preventing casein precipitation in milk.</text>
</comment>
<comment type="subcellular location">
    <subcellularLocation>
        <location>Secreted</location>
    </subcellularLocation>
</comment>
<comment type="tissue specificity">
    <text>Mammary gland specific. Secreted in milk.</text>
</comment>
<comment type="similarity">
    <text evidence="5">Belongs to the kappa-casein family.</text>
</comment>
<name>CASK_OREAM</name>